<sequence>MSAIESVLHERRQFAPPAAVEKAAAISGMAAYRALAEEAERDYEGFWARLARETLEWRKPFGKVLDETNAPFYKWFEDGELNASYNCLDRHVAAGLGERVAVIFEADDGTVTRVTYADLLARVSRFANALKKRGVGRGDRVVIYIPMSVEGIVAMQACARIGATHSVVFGGFSSKSLHERIVDVGATALVTADEQMRGGKTLPLKSIADEALAMGGCDAVKTVVVYRRTGGNVDWHAGRDVWMHEMVANESDACEPEWVGAEHPLFILYTSGSTGKPKGVQHSTAGYLLWVAQTMKWTFDWKPDDVFWCTADIGWVTGHSYITYGPLAVGATQVVFEGVPTYPNAGRFWKMIGDHKVTVFYTAPTAIRSLIKAAEADDRVHPRSYDLSSLRIIGTVGEPINPEAWIWYHKNVGQARCPIVDTWWQTETGGHMITPLPGATPTVPGSCTLPLPGIMAAVVDETGQDVPNGQGGILVVKRPWPAMARTIWGDPERFKKSYFPEELGGRLYLAGDGTVRDKETGYFTIMGRIDDVLNVSGHRLGTMEIESALVSHELVAEAAVVGRPDDTTGEAVVAFVVLKRSRPEGEEAAALAKTLRDWVGKEIGPIAKPKDIRFGDNLPKTRSGKIMRRLLRSLAKGEAITQDTSTLENPAILEQLAEVR</sequence>
<organism>
    <name type="scientific">Burkholderia pseudomallei (strain 1710b)</name>
    <dbReference type="NCBI Taxonomy" id="320372"/>
    <lineage>
        <taxon>Bacteria</taxon>
        <taxon>Pseudomonadati</taxon>
        <taxon>Pseudomonadota</taxon>
        <taxon>Betaproteobacteria</taxon>
        <taxon>Burkholderiales</taxon>
        <taxon>Burkholderiaceae</taxon>
        <taxon>Burkholderia</taxon>
        <taxon>pseudomallei group</taxon>
    </lineage>
</organism>
<evidence type="ECO:0000255" key="1">
    <source>
        <dbReference type="HAMAP-Rule" id="MF_01123"/>
    </source>
</evidence>
<protein>
    <recommendedName>
        <fullName evidence="1">Acetyl-coenzyme A synthetase</fullName>
        <shortName evidence="1">AcCoA synthetase</shortName>
        <shortName evidence="1">Acs</shortName>
        <ecNumber evidence="1">6.2.1.1</ecNumber>
    </recommendedName>
    <alternativeName>
        <fullName evidence="1">Acetate--CoA ligase</fullName>
    </alternativeName>
    <alternativeName>
        <fullName evidence="1">Acyl-activating enzyme</fullName>
    </alternativeName>
</protein>
<comment type="function">
    <text evidence="1">Catalyzes the conversion of acetate into acetyl-CoA (AcCoA), an essential intermediate at the junction of anabolic and catabolic pathways. AcsA undergoes a two-step reaction. In the first half reaction, AcsA combines acetate with ATP to form acetyl-adenylate (AcAMP) intermediate. In the second half reaction, it can then transfer the acetyl group from AcAMP to the sulfhydryl group of CoA, forming the product AcCoA.</text>
</comment>
<comment type="catalytic activity">
    <reaction evidence="1">
        <text>acetate + ATP + CoA = acetyl-CoA + AMP + diphosphate</text>
        <dbReference type="Rhea" id="RHEA:23176"/>
        <dbReference type="ChEBI" id="CHEBI:30089"/>
        <dbReference type="ChEBI" id="CHEBI:30616"/>
        <dbReference type="ChEBI" id="CHEBI:33019"/>
        <dbReference type="ChEBI" id="CHEBI:57287"/>
        <dbReference type="ChEBI" id="CHEBI:57288"/>
        <dbReference type="ChEBI" id="CHEBI:456215"/>
        <dbReference type="EC" id="6.2.1.1"/>
    </reaction>
</comment>
<comment type="cofactor">
    <cofactor evidence="1">
        <name>Mg(2+)</name>
        <dbReference type="ChEBI" id="CHEBI:18420"/>
    </cofactor>
</comment>
<comment type="PTM">
    <text evidence="1">Acetylated. Deacetylation by the SIR2-homolog deacetylase activates the enzyme.</text>
</comment>
<comment type="similarity">
    <text evidence="1">Belongs to the ATP-dependent AMP-binding enzyme family.</text>
</comment>
<accession>Q3JH62</accession>
<name>ACSA_BURP1</name>
<feature type="chain" id="PRO_1000065282" description="Acetyl-coenzyme A synthetase">
    <location>
        <begin position="1"/>
        <end position="660"/>
    </location>
</feature>
<feature type="binding site" evidence="1">
    <location>
        <begin position="197"/>
        <end position="200"/>
    </location>
    <ligand>
        <name>CoA</name>
        <dbReference type="ChEBI" id="CHEBI:57287"/>
    </ligand>
</feature>
<feature type="binding site" evidence="1">
    <location>
        <position position="317"/>
    </location>
    <ligand>
        <name>CoA</name>
        <dbReference type="ChEBI" id="CHEBI:57287"/>
    </ligand>
</feature>
<feature type="binding site" evidence="1">
    <location>
        <begin position="397"/>
        <end position="399"/>
    </location>
    <ligand>
        <name>ATP</name>
        <dbReference type="ChEBI" id="CHEBI:30616"/>
    </ligand>
</feature>
<feature type="binding site" evidence="1">
    <location>
        <begin position="421"/>
        <end position="426"/>
    </location>
    <ligand>
        <name>ATP</name>
        <dbReference type="ChEBI" id="CHEBI:30616"/>
    </ligand>
</feature>
<feature type="binding site" evidence="1">
    <location>
        <position position="512"/>
    </location>
    <ligand>
        <name>ATP</name>
        <dbReference type="ChEBI" id="CHEBI:30616"/>
    </ligand>
</feature>
<feature type="binding site" evidence="1">
    <location>
        <position position="528"/>
    </location>
    <ligand>
        <name>ATP</name>
        <dbReference type="ChEBI" id="CHEBI:30616"/>
    </ligand>
</feature>
<feature type="binding site" evidence="1">
    <location>
        <position position="536"/>
    </location>
    <ligand>
        <name>CoA</name>
        <dbReference type="ChEBI" id="CHEBI:57287"/>
    </ligand>
</feature>
<feature type="binding site" evidence="1">
    <location>
        <position position="539"/>
    </location>
    <ligand>
        <name>ATP</name>
        <dbReference type="ChEBI" id="CHEBI:30616"/>
    </ligand>
</feature>
<feature type="binding site" evidence="1">
    <location>
        <position position="550"/>
    </location>
    <ligand>
        <name>Mg(2+)</name>
        <dbReference type="ChEBI" id="CHEBI:18420"/>
    </ligand>
</feature>
<feature type="binding site" evidence="1">
    <location>
        <position position="552"/>
    </location>
    <ligand>
        <name>Mg(2+)</name>
        <dbReference type="ChEBI" id="CHEBI:18420"/>
    </ligand>
</feature>
<feature type="binding site" evidence="1">
    <location>
        <position position="555"/>
    </location>
    <ligand>
        <name>Mg(2+)</name>
        <dbReference type="ChEBI" id="CHEBI:18420"/>
    </ligand>
</feature>
<feature type="modified residue" description="N6-acetyllysine" evidence="1">
    <location>
        <position position="625"/>
    </location>
</feature>
<proteinExistence type="inferred from homology"/>
<reference key="1">
    <citation type="journal article" date="2010" name="Genome Biol. Evol.">
        <title>Continuing evolution of Burkholderia mallei through genome reduction and large-scale rearrangements.</title>
        <authorList>
            <person name="Losada L."/>
            <person name="Ronning C.M."/>
            <person name="DeShazer D."/>
            <person name="Woods D."/>
            <person name="Fedorova N."/>
            <person name="Kim H.S."/>
            <person name="Shabalina S.A."/>
            <person name="Pearson T.R."/>
            <person name="Brinkac L."/>
            <person name="Tan P."/>
            <person name="Nandi T."/>
            <person name="Crabtree J."/>
            <person name="Badger J."/>
            <person name="Beckstrom-Sternberg S."/>
            <person name="Saqib M."/>
            <person name="Schutzer S.E."/>
            <person name="Keim P."/>
            <person name="Nierman W.C."/>
        </authorList>
    </citation>
    <scope>NUCLEOTIDE SEQUENCE [LARGE SCALE GENOMIC DNA]</scope>
    <source>
        <strain>1710b</strain>
    </source>
</reference>
<gene>
    <name evidence="1" type="primary">acsA</name>
    <name type="ordered locus">BURPS1710b_A1939</name>
</gene>
<dbReference type="EC" id="6.2.1.1" evidence="1"/>
<dbReference type="EMBL" id="CP000125">
    <property type="protein sequence ID" value="ABA51683.1"/>
    <property type="molecule type" value="Genomic_DNA"/>
</dbReference>
<dbReference type="SMR" id="Q3JH62"/>
<dbReference type="EnsemblBacteria" id="ABA51683">
    <property type="protein sequence ID" value="ABA51683"/>
    <property type="gene ID" value="BURPS1710b_A1939"/>
</dbReference>
<dbReference type="KEGG" id="bpm:BURPS1710b_A1939"/>
<dbReference type="HOGENOM" id="CLU_000022_3_6_4"/>
<dbReference type="Proteomes" id="UP000002700">
    <property type="component" value="Chromosome II"/>
</dbReference>
<dbReference type="GO" id="GO:0005829">
    <property type="term" value="C:cytosol"/>
    <property type="evidence" value="ECO:0007669"/>
    <property type="project" value="TreeGrafter"/>
</dbReference>
<dbReference type="GO" id="GO:0003987">
    <property type="term" value="F:acetate-CoA ligase activity"/>
    <property type="evidence" value="ECO:0007669"/>
    <property type="project" value="UniProtKB-UniRule"/>
</dbReference>
<dbReference type="GO" id="GO:0016208">
    <property type="term" value="F:AMP binding"/>
    <property type="evidence" value="ECO:0007669"/>
    <property type="project" value="InterPro"/>
</dbReference>
<dbReference type="GO" id="GO:0005524">
    <property type="term" value="F:ATP binding"/>
    <property type="evidence" value="ECO:0007669"/>
    <property type="project" value="UniProtKB-KW"/>
</dbReference>
<dbReference type="GO" id="GO:0046872">
    <property type="term" value="F:metal ion binding"/>
    <property type="evidence" value="ECO:0007669"/>
    <property type="project" value="UniProtKB-KW"/>
</dbReference>
<dbReference type="GO" id="GO:0019427">
    <property type="term" value="P:acetyl-CoA biosynthetic process from acetate"/>
    <property type="evidence" value="ECO:0007669"/>
    <property type="project" value="InterPro"/>
</dbReference>
<dbReference type="CDD" id="cd05966">
    <property type="entry name" value="ACS"/>
    <property type="match status" value="1"/>
</dbReference>
<dbReference type="FunFam" id="3.40.50.12780:FF:000001">
    <property type="entry name" value="Acetyl-coenzyme A synthetase"/>
    <property type="match status" value="1"/>
</dbReference>
<dbReference type="Gene3D" id="3.30.300.30">
    <property type="match status" value="1"/>
</dbReference>
<dbReference type="Gene3D" id="3.40.50.12780">
    <property type="entry name" value="N-terminal domain of ligase-like"/>
    <property type="match status" value="1"/>
</dbReference>
<dbReference type="HAMAP" id="MF_01123">
    <property type="entry name" value="Ac_CoA_synth"/>
    <property type="match status" value="1"/>
</dbReference>
<dbReference type="InterPro" id="IPR011904">
    <property type="entry name" value="Ac_CoA_lig"/>
</dbReference>
<dbReference type="InterPro" id="IPR032387">
    <property type="entry name" value="ACAS_N"/>
</dbReference>
<dbReference type="InterPro" id="IPR025110">
    <property type="entry name" value="AMP-bd_C"/>
</dbReference>
<dbReference type="InterPro" id="IPR045851">
    <property type="entry name" value="AMP-bd_C_sf"/>
</dbReference>
<dbReference type="InterPro" id="IPR020845">
    <property type="entry name" value="AMP-binding_CS"/>
</dbReference>
<dbReference type="InterPro" id="IPR000873">
    <property type="entry name" value="AMP-dep_synth/lig_dom"/>
</dbReference>
<dbReference type="InterPro" id="IPR042099">
    <property type="entry name" value="ANL_N_sf"/>
</dbReference>
<dbReference type="NCBIfam" id="TIGR02188">
    <property type="entry name" value="Ac_CoA_lig_AcsA"/>
    <property type="match status" value="1"/>
</dbReference>
<dbReference type="NCBIfam" id="NF001208">
    <property type="entry name" value="PRK00174.1"/>
    <property type="match status" value="1"/>
</dbReference>
<dbReference type="PANTHER" id="PTHR24095">
    <property type="entry name" value="ACETYL-COENZYME A SYNTHETASE"/>
    <property type="match status" value="1"/>
</dbReference>
<dbReference type="PANTHER" id="PTHR24095:SF14">
    <property type="entry name" value="ACETYL-COENZYME A SYNTHETASE 1"/>
    <property type="match status" value="1"/>
</dbReference>
<dbReference type="Pfam" id="PF16177">
    <property type="entry name" value="ACAS_N"/>
    <property type="match status" value="1"/>
</dbReference>
<dbReference type="Pfam" id="PF00501">
    <property type="entry name" value="AMP-binding"/>
    <property type="match status" value="1"/>
</dbReference>
<dbReference type="Pfam" id="PF13193">
    <property type="entry name" value="AMP-binding_C"/>
    <property type="match status" value="1"/>
</dbReference>
<dbReference type="SUPFAM" id="SSF56801">
    <property type="entry name" value="Acetyl-CoA synthetase-like"/>
    <property type="match status" value="1"/>
</dbReference>
<dbReference type="PROSITE" id="PS00455">
    <property type="entry name" value="AMP_BINDING"/>
    <property type="match status" value="1"/>
</dbReference>
<keyword id="KW-0007">Acetylation</keyword>
<keyword id="KW-0067">ATP-binding</keyword>
<keyword id="KW-0436">Ligase</keyword>
<keyword id="KW-0460">Magnesium</keyword>
<keyword id="KW-0479">Metal-binding</keyword>
<keyword id="KW-0547">Nucleotide-binding</keyword>